<comment type="function">
    <text evidence="1">Redox regulated molecular chaperone. Protects both thermally unfolding and oxidatively damaged proteins from irreversible aggregation. Plays an important role in the bacterial defense system toward oxidative stress.</text>
</comment>
<comment type="subcellular location">
    <subcellularLocation>
        <location evidence="1">Cytoplasm</location>
    </subcellularLocation>
</comment>
<comment type="PTM">
    <text evidence="1">Under oxidizing conditions two disulfide bonds are formed involving the reactive cysteines. Under reducing conditions zinc is bound to the reactive cysteines and the protein is inactive.</text>
</comment>
<comment type="similarity">
    <text evidence="1">Belongs to the HSP33 family.</text>
</comment>
<name>HSLO_SYNP6</name>
<organism>
    <name type="scientific">Synechococcus sp. (strain ATCC 27144 / PCC 6301 / SAUG 1402/1)</name>
    <name type="common">Anacystis nidulans</name>
    <dbReference type="NCBI Taxonomy" id="269084"/>
    <lineage>
        <taxon>Bacteria</taxon>
        <taxon>Bacillati</taxon>
        <taxon>Cyanobacteriota</taxon>
        <taxon>Cyanophyceae</taxon>
        <taxon>Synechococcales</taxon>
        <taxon>Synechococcaceae</taxon>
        <taxon>Synechococcus</taxon>
    </lineage>
</organism>
<evidence type="ECO:0000255" key="1">
    <source>
        <dbReference type="HAMAP-Rule" id="MF_00117"/>
    </source>
</evidence>
<proteinExistence type="inferred from homology"/>
<sequence>MADQLIRATAAGGGIRAVGVITTDLTAEAQRKHGLSFVATTALGRSMAAGLLLASSMKKEGSRVNLRIRSAGPLGGLMVDAGLDGTVRGYVEHPAIEIEPNTQGLPDVGRAIGPGYLHVMRDVGYGQPYTSTVELVNGEIGDDVAYYLASSEQTPSAILLGVYLDRQGVEAAGGLLIQVLPQAARDPELVSLLESRISHLKGFTQLLRSGKDLPEILEDLLGDLDLTILAEPRSLRFFCPCTHQRMLGALKIFGAPELRDMIAKDQGAEATCEFCSEVYQASIEELEELISDLETAA</sequence>
<keyword id="KW-0143">Chaperone</keyword>
<keyword id="KW-0963">Cytoplasm</keyword>
<keyword id="KW-1015">Disulfide bond</keyword>
<keyword id="KW-0676">Redox-active center</keyword>
<keyword id="KW-0862">Zinc</keyword>
<accession>Q5N3G7</accession>
<reference key="1">
    <citation type="journal article" date="2007" name="Photosyn. Res.">
        <title>Complete nucleotide sequence of the freshwater unicellular cyanobacterium Synechococcus elongatus PCC 6301 chromosome: gene content and organization.</title>
        <authorList>
            <person name="Sugita C."/>
            <person name="Ogata K."/>
            <person name="Shikata M."/>
            <person name="Jikuya H."/>
            <person name="Takano J."/>
            <person name="Furumichi M."/>
            <person name="Kanehisa M."/>
            <person name="Omata T."/>
            <person name="Sugiura M."/>
            <person name="Sugita M."/>
        </authorList>
    </citation>
    <scope>NUCLEOTIDE SEQUENCE [LARGE SCALE GENOMIC DNA]</scope>
    <source>
        <strain>ATCC 27144 / PCC 6301 / SAUG 1402/1</strain>
    </source>
</reference>
<protein>
    <recommendedName>
        <fullName evidence="1">33 kDa chaperonin</fullName>
    </recommendedName>
    <alternativeName>
        <fullName evidence="1">Heat shock protein 33 homolog</fullName>
        <shortName evidence="1">HSP33</shortName>
    </alternativeName>
</protein>
<dbReference type="EMBL" id="AP008231">
    <property type="protein sequence ID" value="BAD79153.1"/>
    <property type="molecule type" value="Genomic_DNA"/>
</dbReference>
<dbReference type="RefSeq" id="WP_011243275.1">
    <property type="nucleotide sequence ID" value="NZ_CP085785.1"/>
</dbReference>
<dbReference type="SMR" id="Q5N3G7"/>
<dbReference type="GeneID" id="72429384"/>
<dbReference type="KEGG" id="syc:syc0963_d"/>
<dbReference type="eggNOG" id="COG1281">
    <property type="taxonomic scope" value="Bacteria"/>
</dbReference>
<dbReference type="Proteomes" id="UP000001175">
    <property type="component" value="Chromosome"/>
</dbReference>
<dbReference type="GO" id="GO:0005737">
    <property type="term" value="C:cytoplasm"/>
    <property type="evidence" value="ECO:0007669"/>
    <property type="project" value="UniProtKB-SubCell"/>
</dbReference>
<dbReference type="GO" id="GO:0044183">
    <property type="term" value="F:protein folding chaperone"/>
    <property type="evidence" value="ECO:0007669"/>
    <property type="project" value="TreeGrafter"/>
</dbReference>
<dbReference type="GO" id="GO:0051082">
    <property type="term" value="F:unfolded protein binding"/>
    <property type="evidence" value="ECO:0007669"/>
    <property type="project" value="UniProtKB-UniRule"/>
</dbReference>
<dbReference type="GO" id="GO:0042026">
    <property type="term" value="P:protein refolding"/>
    <property type="evidence" value="ECO:0007669"/>
    <property type="project" value="TreeGrafter"/>
</dbReference>
<dbReference type="CDD" id="cd00498">
    <property type="entry name" value="Hsp33"/>
    <property type="match status" value="1"/>
</dbReference>
<dbReference type="Gene3D" id="3.55.30.10">
    <property type="entry name" value="Hsp33 domain"/>
    <property type="match status" value="1"/>
</dbReference>
<dbReference type="Gene3D" id="3.90.1280.10">
    <property type="entry name" value="HSP33 redox switch-like"/>
    <property type="match status" value="1"/>
</dbReference>
<dbReference type="HAMAP" id="MF_00117">
    <property type="entry name" value="HslO"/>
    <property type="match status" value="1"/>
</dbReference>
<dbReference type="InterPro" id="IPR000397">
    <property type="entry name" value="Heat_shock_Hsp33"/>
</dbReference>
<dbReference type="InterPro" id="IPR016154">
    <property type="entry name" value="Heat_shock_Hsp33_C"/>
</dbReference>
<dbReference type="InterPro" id="IPR016153">
    <property type="entry name" value="Heat_shock_Hsp33_N"/>
</dbReference>
<dbReference type="NCBIfam" id="NF001033">
    <property type="entry name" value="PRK00114.1"/>
    <property type="match status" value="1"/>
</dbReference>
<dbReference type="PANTHER" id="PTHR30111">
    <property type="entry name" value="33 KDA CHAPERONIN"/>
    <property type="match status" value="1"/>
</dbReference>
<dbReference type="PANTHER" id="PTHR30111:SF1">
    <property type="entry name" value="33 KDA CHAPERONIN"/>
    <property type="match status" value="1"/>
</dbReference>
<dbReference type="Pfam" id="PF01430">
    <property type="entry name" value="HSP33"/>
    <property type="match status" value="1"/>
</dbReference>
<dbReference type="PIRSF" id="PIRSF005261">
    <property type="entry name" value="Heat_shock_Hsp33"/>
    <property type="match status" value="1"/>
</dbReference>
<dbReference type="SUPFAM" id="SSF64397">
    <property type="entry name" value="Hsp33 domain"/>
    <property type="match status" value="1"/>
</dbReference>
<dbReference type="SUPFAM" id="SSF118352">
    <property type="entry name" value="HSP33 redox switch-like"/>
    <property type="match status" value="1"/>
</dbReference>
<gene>
    <name evidence="1" type="primary">hslO</name>
    <name type="ordered locus">syc0963_d</name>
</gene>
<feature type="chain" id="PRO_0000238106" description="33 kDa chaperonin">
    <location>
        <begin position="1"/>
        <end position="297"/>
    </location>
</feature>
<feature type="disulfide bond" description="Redox-active" evidence="1">
    <location>
        <begin position="239"/>
        <end position="241"/>
    </location>
</feature>
<feature type="disulfide bond" description="Redox-active" evidence="1">
    <location>
        <begin position="272"/>
        <end position="275"/>
    </location>
</feature>